<dbReference type="EMBL" id="CP001172">
    <property type="protein sequence ID" value="ACJ57691.1"/>
    <property type="molecule type" value="Genomic_DNA"/>
</dbReference>
<dbReference type="RefSeq" id="WP_000013652.1">
    <property type="nucleotide sequence ID" value="NZ_CP001172.1"/>
</dbReference>
<dbReference type="SMR" id="B7H3I4"/>
<dbReference type="GeneID" id="92893827"/>
<dbReference type="HOGENOM" id="CLU_160655_4_0_6"/>
<dbReference type="Proteomes" id="UP000006924">
    <property type="component" value="Chromosome"/>
</dbReference>
<dbReference type="GO" id="GO:0005829">
    <property type="term" value="C:cytosol"/>
    <property type="evidence" value="ECO:0007669"/>
    <property type="project" value="TreeGrafter"/>
</dbReference>
<dbReference type="GO" id="GO:0015935">
    <property type="term" value="C:small ribosomal subunit"/>
    <property type="evidence" value="ECO:0007669"/>
    <property type="project" value="TreeGrafter"/>
</dbReference>
<dbReference type="GO" id="GO:0070181">
    <property type="term" value="F:small ribosomal subunit rRNA binding"/>
    <property type="evidence" value="ECO:0007669"/>
    <property type="project" value="TreeGrafter"/>
</dbReference>
<dbReference type="GO" id="GO:0003735">
    <property type="term" value="F:structural constituent of ribosome"/>
    <property type="evidence" value="ECO:0007669"/>
    <property type="project" value="InterPro"/>
</dbReference>
<dbReference type="GO" id="GO:0006412">
    <property type="term" value="P:translation"/>
    <property type="evidence" value="ECO:0007669"/>
    <property type="project" value="UniProtKB-UniRule"/>
</dbReference>
<dbReference type="FunFam" id="1.20.58.110:FF:000001">
    <property type="entry name" value="30S ribosomal protein S20"/>
    <property type="match status" value="1"/>
</dbReference>
<dbReference type="Gene3D" id="1.20.58.110">
    <property type="entry name" value="Ribosomal protein S20"/>
    <property type="match status" value="1"/>
</dbReference>
<dbReference type="HAMAP" id="MF_00500">
    <property type="entry name" value="Ribosomal_bS20"/>
    <property type="match status" value="1"/>
</dbReference>
<dbReference type="InterPro" id="IPR002583">
    <property type="entry name" value="Ribosomal_bS20"/>
</dbReference>
<dbReference type="InterPro" id="IPR036510">
    <property type="entry name" value="Ribosomal_bS20_sf"/>
</dbReference>
<dbReference type="NCBIfam" id="TIGR00029">
    <property type="entry name" value="S20"/>
    <property type="match status" value="1"/>
</dbReference>
<dbReference type="PANTHER" id="PTHR33398">
    <property type="entry name" value="30S RIBOSOMAL PROTEIN S20"/>
    <property type="match status" value="1"/>
</dbReference>
<dbReference type="PANTHER" id="PTHR33398:SF1">
    <property type="entry name" value="SMALL RIBOSOMAL SUBUNIT PROTEIN BS20C"/>
    <property type="match status" value="1"/>
</dbReference>
<dbReference type="Pfam" id="PF01649">
    <property type="entry name" value="Ribosomal_S20p"/>
    <property type="match status" value="1"/>
</dbReference>
<dbReference type="SUPFAM" id="SSF46992">
    <property type="entry name" value="Ribosomal protein S20"/>
    <property type="match status" value="1"/>
</dbReference>
<organism>
    <name type="scientific">Acinetobacter baumannii (strain AB307-0294)</name>
    <dbReference type="NCBI Taxonomy" id="557600"/>
    <lineage>
        <taxon>Bacteria</taxon>
        <taxon>Pseudomonadati</taxon>
        <taxon>Pseudomonadota</taxon>
        <taxon>Gammaproteobacteria</taxon>
        <taxon>Moraxellales</taxon>
        <taxon>Moraxellaceae</taxon>
        <taxon>Acinetobacter</taxon>
        <taxon>Acinetobacter calcoaceticus/baumannii complex</taxon>
    </lineage>
</organism>
<accession>B7H3I4</accession>
<comment type="function">
    <text evidence="1">Binds directly to 16S ribosomal RNA.</text>
</comment>
<comment type="similarity">
    <text evidence="1">Belongs to the bacterial ribosomal protein bS20 family.</text>
</comment>
<protein>
    <recommendedName>
        <fullName evidence="1">Small ribosomal subunit protein bS20</fullName>
    </recommendedName>
    <alternativeName>
        <fullName evidence="3">30S ribosomal protein S20</fullName>
    </alternativeName>
</protein>
<keyword id="KW-0687">Ribonucleoprotein</keyword>
<keyword id="KW-0689">Ribosomal protein</keyword>
<keyword id="KW-0694">RNA-binding</keyword>
<keyword id="KW-0699">rRNA-binding</keyword>
<reference key="1">
    <citation type="journal article" date="2008" name="J. Bacteriol.">
        <title>Comparative genome sequence analysis of multidrug-resistant Acinetobacter baumannii.</title>
        <authorList>
            <person name="Adams M.D."/>
            <person name="Goglin K."/>
            <person name="Molyneaux N."/>
            <person name="Hujer K.M."/>
            <person name="Lavender H."/>
            <person name="Jamison J.J."/>
            <person name="MacDonald I.J."/>
            <person name="Martin K.M."/>
            <person name="Russo T."/>
            <person name="Campagnari A.A."/>
            <person name="Hujer A.M."/>
            <person name="Bonomo R.A."/>
            <person name="Gill S.R."/>
        </authorList>
    </citation>
    <scope>NUCLEOTIDE SEQUENCE [LARGE SCALE GENOMIC DNA]</scope>
    <source>
        <strain>AB307-0294</strain>
    </source>
</reference>
<name>RS20_ACIB3</name>
<sequence>MANSAQAKKRARQNVKARKHNASLRSMVRTYIKRTLSAIAGGDYAVATEAYKKAVPVIDRMADKGIIHKNKAARHKSRLNAQVKALAN</sequence>
<proteinExistence type="inferred from homology"/>
<evidence type="ECO:0000255" key="1">
    <source>
        <dbReference type="HAMAP-Rule" id="MF_00500"/>
    </source>
</evidence>
<evidence type="ECO:0000256" key="2">
    <source>
        <dbReference type="SAM" id="MobiDB-lite"/>
    </source>
</evidence>
<evidence type="ECO:0000305" key="3"/>
<feature type="chain" id="PRO_1000126382" description="Small ribosomal subunit protein bS20">
    <location>
        <begin position="1"/>
        <end position="88"/>
    </location>
</feature>
<feature type="region of interest" description="Disordered" evidence="2">
    <location>
        <begin position="1"/>
        <end position="21"/>
    </location>
</feature>
<feature type="compositionally biased region" description="Basic residues" evidence="2">
    <location>
        <begin position="7"/>
        <end position="21"/>
    </location>
</feature>
<gene>
    <name evidence="1" type="primary">rpsT</name>
    <name type="ordered locus">ABBFA_001879</name>
</gene>